<evidence type="ECO:0000250" key="1"/>
<evidence type="ECO:0000250" key="2">
    <source>
        <dbReference type="UniProtKB" id="P9WGT7"/>
    </source>
</evidence>
<evidence type="ECO:0000255" key="3">
    <source>
        <dbReference type="PROSITE-ProRule" id="PRU00303"/>
    </source>
</evidence>
<evidence type="ECO:0000256" key="4">
    <source>
        <dbReference type="SAM" id="MobiDB-lite"/>
    </source>
</evidence>
<evidence type="ECO:0000305" key="5"/>
<sequence length="364" mass="38668">MKVHFAGFTLLCLCTAVTITGCKPSNDNQSTGVSQDANSTTPPSAEQTKSVKISGAGASFIYPLISQWSADYNAATGNKINYQSIGSGGGIAQIKAATIDFGSSDKPLDSSELTKAGLGQFPSAIGGVVPVVNLDNIEPGKLRLTGPLLADIFLGKISKWNDAAIISANPGLHLPDTKINIVHRSDGSGTTFNFSNYLSKVSAEWKQKVGEGTSVQWPGGVGGKGNEGVASYVQQIKGSIGYVELAYALQNKMSYTALQNAAGQWVQPSAESFAAAASNADWSNAKDFNLVITNATGEGAWPITATNFILMPKQTKDAAQRKATLDFFKWCFENGQKQANELHYVPLPPNLVKQIEAYWASEFK</sequence>
<organism>
    <name type="scientific">Xylella fastidiosa (strain Temecula1 / ATCC 700964)</name>
    <dbReference type="NCBI Taxonomy" id="183190"/>
    <lineage>
        <taxon>Bacteria</taxon>
        <taxon>Pseudomonadati</taxon>
        <taxon>Pseudomonadota</taxon>
        <taxon>Gammaproteobacteria</taxon>
        <taxon>Lysobacterales</taxon>
        <taxon>Lysobacteraceae</taxon>
        <taxon>Xylella</taxon>
    </lineage>
</organism>
<name>PSTS_XYLFT</name>
<dbReference type="EMBL" id="AE009442">
    <property type="protein sequence ID" value="AAO29053.1"/>
    <property type="molecule type" value="Genomic_DNA"/>
</dbReference>
<dbReference type="RefSeq" id="WP_004086092.1">
    <property type="nucleotide sequence ID" value="NC_004556.1"/>
</dbReference>
<dbReference type="SMR" id="Q87C91"/>
<dbReference type="GeneID" id="93905002"/>
<dbReference type="KEGG" id="xft:PD_1202"/>
<dbReference type="HOGENOM" id="CLU_034528_1_0_6"/>
<dbReference type="Proteomes" id="UP000002516">
    <property type="component" value="Chromosome"/>
</dbReference>
<dbReference type="GO" id="GO:0043190">
    <property type="term" value="C:ATP-binding cassette (ABC) transporter complex"/>
    <property type="evidence" value="ECO:0007669"/>
    <property type="project" value="InterPro"/>
</dbReference>
<dbReference type="GO" id="GO:0042597">
    <property type="term" value="C:periplasmic space"/>
    <property type="evidence" value="ECO:0007669"/>
    <property type="project" value="UniProtKB-SubCell"/>
</dbReference>
<dbReference type="GO" id="GO:0042301">
    <property type="term" value="F:phosphate ion binding"/>
    <property type="evidence" value="ECO:0007669"/>
    <property type="project" value="InterPro"/>
</dbReference>
<dbReference type="GO" id="GO:0035435">
    <property type="term" value="P:phosphate ion transmembrane transport"/>
    <property type="evidence" value="ECO:0007669"/>
    <property type="project" value="InterPro"/>
</dbReference>
<dbReference type="CDD" id="cd13565">
    <property type="entry name" value="PBP2_PstS"/>
    <property type="match status" value="1"/>
</dbReference>
<dbReference type="Gene3D" id="3.40.190.10">
    <property type="entry name" value="Periplasmic binding protein-like II"/>
    <property type="match status" value="2"/>
</dbReference>
<dbReference type="InterPro" id="IPR005673">
    <property type="entry name" value="ABC_phos-bd_PstS"/>
</dbReference>
<dbReference type="InterPro" id="IPR024370">
    <property type="entry name" value="PBP_domain"/>
</dbReference>
<dbReference type="InterPro" id="IPR050962">
    <property type="entry name" value="Phosphate-bind_PstS"/>
</dbReference>
<dbReference type="NCBIfam" id="TIGR00975">
    <property type="entry name" value="3a0107s03"/>
    <property type="match status" value="1"/>
</dbReference>
<dbReference type="NCBIfam" id="NF008171">
    <property type="entry name" value="PRK10918.1"/>
    <property type="match status" value="1"/>
</dbReference>
<dbReference type="PANTHER" id="PTHR42996">
    <property type="entry name" value="PHOSPHATE-BINDING PROTEIN PSTS"/>
    <property type="match status" value="1"/>
</dbReference>
<dbReference type="PANTHER" id="PTHR42996:SF1">
    <property type="entry name" value="PHOSPHATE-BINDING PROTEIN PSTS"/>
    <property type="match status" value="1"/>
</dbReference>
<dbReference type="Pfam" id="PF12849">
    <property type="entry name" value="PBP_like_2"/>
    <property type="match status" value="1"/>
</dbReference>
<dbReference type="PIRSF" id="PIRSF002756">
    <property type="entry name" value="PstS"/>
    <property type="match status" value="1"/>
</dbReference>
<dbReference type="SUPFAM" id="SSF53850">
    <property type="entry name" value="Periplasmic binding protein-like II"/>
    <property type="match status" value="1"/>
</dbReference>
<dbReference type="PROSITE" id="PS51257">
    <property type="entry name" value="PROKAR_LIPOPROTEIN"/>
    <property type="match status" value="1"/>
</dbReference>
<protein>
    <recommendedName>
        <fullName>Phosphate-binding protein PstS</fullName>
        <shortName>PBP</shortName>
    </recommendedName>
</protein>
<accession>Q87C91</accession>
<gene>
    <name type="primary">pstS</name>
    <name type="ordered locus">PD_1202</name>
</gene>
<reference key="1">
    <citation type="journal article" date="2003" name="J. Bacteriol.">
        <title>Comparative analyses of the complete genome sequences of Pierce's disease and citrus variegated chlorosis strains of Xylella fastidiosa.</title>
        <authorList>
            <person name="Van Sluys M.A."/>
            <person name="de Oliveira M.C."/>
            <person name="Monteiro-Vitorello C.B."/>
            <person name="Miyaki C.Y."/>
            <person name="Furlan L.R."/>
            <person name="Camargo L.E.A."/>
            <person name="da Silva A.C.R."/>
            <person name="Moon D.H."/>
            <person name="Takita M.A."/>
            <person name="Lemos E.G.M."/>
            <person name="Machado M.A."/>
            <person name="Ferro M.I.T."/>
            <person name="da Silva F.R."/>
            <person name="Goldman M.H.S."/>
            <person name="Goldman G.H."/>
            <person name="Lemos M.V.F."/>
            <person name="El-Dorry H."/>
            <person name="Tsai S.M."/>
            <person name="Carrer H."/>
            <person name="Carraro D.M."/>
            <person name="de Oliveira R.C."/>
            <person name="Nunes L.R."/>
            <person name="Siqueira W.J."/>
            <person name="Coutinho L.L."/>
            <person name="Kimura E.T."/>
            <person name="Ferro E.S."/>
            <person name="Harakava R."/>
            <person name="Kuramae E.E."/>
            <person name="Marino C.L."/>
            <person name="Giglioti E."/>
            <person name="Abreu I.L."/>
            <person name="Alves L.M.C."/>
            <person name="do Amaral A.M."/>
            <person name="Baia G.S."/>
            <person name="Blanco S.R."/>
            <person name="Brito M.S."/>
            <person name="Cannavan F.S."/>
            <person name="Celestino A.V."/>
            <person name="da Cunha A.F."/>
            <person name="Fenille R.C."/>
            <person name="Ferro J.A."/>
            <person name="Formighieri E.F."/>
            <person name="Kishi L.T."/>
            <person name="Leoni S.G."/>
            <person name="Oliveira A.R."/>
            <person name="Rosa V.E. Jr."/>
            <person name="Sassaki F.T."/>
            <person name="Sena J.A.D."/>
            <person name="de Souza A.A."/>
            <person name="Truffi D."/>
            <person name="Tsukumo F."/>
            <person name="Yanai G.M."/>
            <person name="Zaros L.G."/>
            <person name="Civerolo E.L."/>
            <person name="Simpson A.J.G."/>
            <person name="Almeida N.F. Jr."/>
            <person name="Setubal J.C."/>
            <person name="Kitajima J.P."/>
        </authorList>
    </citation>
    <scope>NUCLEOTIDE SEQUENCE [LARGE SCALE GENOMIC DNA]</scope>
    <source>
        <strain>Temecula1 / ATCC 700964</strain>
    </source>
</reference>
<keyword id="KW-0574">Periplasm</keyword>
<keyword id="KW-0592">Phosphate transport</keyword>
<keyword id="KW-1185">Reference proteome</keyword>
<keyword id="KW-0732">Signal</keyword>
<keyword id="KW-0813">Transport</keyword>
<comment type="function">
    <text evidence="1">Part of the ABC transporter complex PstSACB involved in phosphate import.</text>
</comment>
<comment type="subunit">
    <text evidence="5">The complex is composed of two ATP-binding proteins (PstB), two transmembrane proteins (PstC and PstA) and a solute-binding protein (PstS).</text>
</comment>
<comment type="subcellular location">
    <subcellularLocation>
        <location evidence="1">Periplasm</location>
    </subcellularLocation>
</comment>
<comment type="similarity">
    <text evidence="5">Belongs to the PstS family.</text>
</comment>
<feature type="signal peptide" evidence="3">
    <location>
        <begin position="1"/>
        <end position="18"/>
    </location>
</feature>
<feature type="chain" id="PRO_0000031853" description="Phosphate-binding protein PstS">
    <location>
        <begin position="19"/>
        <end position="364"/>
    </location>
</feature>
<feature type="region of interest" description="Disordered" evidence="4">
    <location>
        <begin position="25"/>
        <end position="50"/>
    </location>
</feature>
<feature type="binding site" evidence="2">
    <location>
        <begin position="58"/>
        <end position="60"/>
    </location>
    <ligand>
        <name>phosphate</name>
        <dbReference type="ChEBI" id="CHEBI:43474"/>
    </ligand>
</feature>
<feature type="binding site" evidence="2">
    <location>
        <position position="87"/>
    </location>
    <ligand>
        <name>phosphate</name>
        <dbReference type="ChEBI" id="CHEBI:43474"/>
    </ligand>
</feature>
<feature type="binding site" evidence="2">
    <location>
        <position position="105"/>
    </location>
    <ligand>
        <name>phosphate</name>
        <dbReference type="ChEBI" id="CHEBI:43474"/>
    </ligand>
</feature>
<feature type="binding site" evidence="2">
    <location>
        <begin position="188"/>
        <end position="190"/>
    </location>
    <ligand>
        <name>phosphate</name>
        <dbReference type="ChEBI" id="CHEBI:43474"/>
    </ligand>
</feature>
<proteinExistence type="inferred from homology"/>